<feature type="chain" id="PRO_0000066341" description="Uncharacterized 26.9 kDa protein in nqo8 5'region">
    <location>
        <begin position="1"/>
        <end position="255"/>
    </location>
</feature>
<dbReference type="EMBL" id="L02354">
    <property type="protein sequence ID" value="AAA25591.1"/>
    <property type="molecule type" value="Genomic_DNA"/>
</dbReference>
<dbReference type="PIR" id="B45456">
    <property type="entry name" value="B45456"/>
</dbReference>
<dbReference type="RefSeq" id="WP_011748526.1">
    <property type="nucleotide sequence ID" value="NZ_PPGA01000003.1"/>
</dbReference>
<dbReference type="GeneID" id="93450639"/>
<dbReference type="PROSITE" id="PS51257">
    <property type="entry name" value="PROKAR_LIPOPROTEIN"/>
    <property type="match status" value="1"/>
</dbReference>
<sequence>MRPRLALLSGIGALALLAGCAETKDARPRPKPAELGVAVLQSDAGAPDKKTLTRGRISTKSGEILILEPDGSVSEMALDSPEGRDAFAVTEAELMALNANLELDLSGLPNMAPVRKREPTAQEKALAAFSARSRPLRLNLPVSFEADPQDFQGAQVAALASSRKGADSLVEVTANLRGGVDADTAFAYATCALASWADAKGASYARHIRTLRDKRNGKMVVGSVFTLSEKKPMGLTVMTTKQTLQECKARGIPAA</sequence>
<name>YNQ4_PARDE</name>
<reference key="1">
    <citation type="journal article" date="1993" name="Biochemistry">
        <title>DNA sequencing of the seven remaining structural genes of the gene cluster encoding the energy-transducing NADH-quinone oxidoreductase of Paracoccus denitrificans.</title>
        <authorList>
            <person name="Xu X."/>
            <person name="Matsuno-Yagi A."/>
            <person name="Yagi T."/>
        </authorList>
    </citation>
    <scope>NUCLEOTIDE SEQUENCE [GENOMIC DNA]</scope>
    <source>
        <strain>ATCC 13543 / NRRL B-3784 / NRC 449</strain>
    </source>
</reference>
<accession>P29910</accession>
<protein>
    <recommendedName>
        <fullName>Uncharacterized 26.9 kDa protein in nqo8 5'region</fullName>
    </recommendedName>
    <alternativeName>
        <fullName>URF4</fullName>
    </alternativeName>
</protein>
<proteinExistence type="predicted"/>
<organism>
    <name type="scientific">Paracoccus denitrificans</name>
    <dbReference type="NCBI Taxonomy" id="266"/>
    <lineage>
        <taxon>Bacteria</taxon>
        <taxon>Pseudomonadati</taxon>
        <taxon>Pseudomonadota</taxon>
        <taxon>Alphaproteobacteria</taxon>
        <taxon>Rhodobacterales</taxon>
        <taxon>Paracoccaceae</taxon>
        <taxon>Paracoccus</taxon>
    </lineage>
</organism>